<keyword id="KW-1185">Reference proteome</keyword>
<keyword id="KW-0687">Ribonucleoprotein</keyword>
<keyword id="KW-0689">Ribosomal protein</keyword>
<keyword id="KW-0694">RNA-binding</keyword>
<keyword id="KW-0699">rRNA-binding</keyword>
<keyword id="KW-0820">tRNA-binding</keyword>
<sequence>MSRKGSTPQRNVLPDPKYGSETIARFINMVMKSGKKSVAEKIVYGAMNVIGEKNSNAIELLQKALDNVSPAVEVKSRRVGGATYQVPVEVRASRRMALAMRWLIDSSRKRGENSMPRKLAAELLDASESRGGAIKKRDETHRMAEANKAFAHYRW</sequence>
<feature type="chain" id="PRO_0000124387" description="Small ribosomal subunit protein uS7">
    <location>
        <begin position="1"/>
        <end position="155"/>
    </location>
</feature>
<reference key="1">
    <citation type="journal article" date="2003" name="J. Bacteriol.">
        <title>Comparative analyses of the complete genome sequences of Pierce's disease and citrus variegated chlorosis strains of Xylella fastidiosa.</title>
        <authorList>
            <person name="Van Sluys M.A."/>
            <person name="de Oliveira M.C."/>
            <person name="Monteiro-Vitorello C.B."/>
            <person name="Miyaki C.Y."/>
            <person name="Furlan L.R."/>
            <person name="Camargo L.E.A."/>
            <person name="da Silva A.C.R."/>
            <person name="Moon D.H."/>
            <person name="Takita M.A."/>
            <person name="Lemos E.G.M."/>
            <person name="Machado M.A."/>
            <person name="Ferro M.I.T."/>
            <person name="da Silva F.R."/>
            <person name="Goldman M.H.S."/>
            <person name="Goldman G.H."/>
            <person name="Lemos M.V.F."/>
            <person name="El-Dorry H."/>
            <person name="Tsai S.M."/>
            <person name="Carrer H."/>
            <person name="Carraro D.M."/>
            <person name="de Oliveira R.C."/>
            <person name="Nunes L.R."/>
            <person name="Siqueira W.J."/>
            <person name="Coutinho L.L."/>
            <person name="Kimura E.T."/>
            <person name="Ferro E.S."/>
            <person name="Harakava R."/>
            <person name="Kuramae E.E."/>
            <person name="Marino C.L."/>
            <person name="Giglioti E."/>
            <person name="Abreu I.L."/>
            <person name="Alves L.M.C."/>
            <person name="do Amaral A.M."/>
            <person name="Baia G.S."/>
            <person name="Blanco S.R."/>
            <person name="Brito M.S."/>
            <person name="Cannavan F.S."/>
            <person name="Celestino A.V."/>
            <person name="da Cunha A.F."/>
            <person name="Fenille R.C."/>
            <person name="Ferro J.A."/>
            <person name="Formighieri E.F."/>
            <person name="Kishi L.T."/>
            <person name="Leoni S.G."/>
            <person name="Oliveira A.R."/>
            <person name="Rosa V.E. Jr."/>
            <person name="Sassaki F.T."/>
            <person name="Sena J.A.D."/>
            <person name="de Souza A.A."/>
            <person name="Truffi D."/>
            <person name="Tsukumo F."/>
            <person name="Yanai G.M."/>
            <person name="Zaros L.G."/>
            <person name="Civerolo E.L."/>
            <person name="Simpson A.J.G."/>
            <person name="Almeida N.F. Jr."/>
            <person name="Setubal J.C."/>
            <person name="Kitajima J.P."/>
        </authorList>
    </citation>
    <scope>NUCLEOTIDE SEQUENCE [LARGE SCALE GENOMIC DNA]</scope>
    <source>
        <strain>Temecula1 / ATCC 700964</strain>
    </source>
</reference>
<protein>
    <recommendedName>
        <fullName evidence="1">Small ribosomal subunit protein uS7</fullName>
    </recommendedName>
    <alternativeName>
        <fullName evidence="2">30S ribosomal protein S7</fullName>
    </alternativeName>
</protein>
<proteinExistence type="inferred from homology"/>
<accession>Q87A34</accession>
<evidence type="ECO:0000255" key="1">
    <source>
        <dbReference type="HAMAP-Rule" id="MF_00480"/>
    </source>
</evidence>
<evidence type="ECO:0000305" key="2"/>
<comment type="function">
    <text evidence="1">One of the primary rRNA binding proteins, it binds directly to 16S rRNA where it nucleates assembly of the head domain of the 30S subunit. Is located at the subunit interface close to the decoding center, probably blocks exit of the E-site tRNA.</text>
</comment>
<comment type="subunit">
    <text evidence="1">Part of the 30S ribosomal subunit. Contacts proteins S9 and S11.</text>
</comment>
<comment type="similarity">
    <text evidence="1">Belongs to the universal ribosomal protein uS7 family.</text>
</comment>
<dbReference type="EMBL" id="AE009442">
    <property type="protein sequence ID" value="AAO29827.1"/>
    <property type="molecule type" value="Genomic_DNA"/>
</dbReference>
<dbReference type="RefSeq" id="WP_004090723.1">
    <property type="nucleotide sequence ID" value="NC_004556.1"/>
</dbReference>
<dbReference type="SMR" id="Q87A34"/>
<dbReference type="GeneID" id="93905859"/>
<dbReference type="KEGG" id="xft:PD_1998"/>
<dbReference type="HOGENOM" id="CLU_072226_1_1_6"/>
<dbReference type="Proteomes" id="UP000002516">
    <property type="component" value="Chromosome"/>
</dbReference>
<dbReference type="GO" id="GO:0015935">
    <property type="term" value="C:small ribosomal subunit"/>
    <property type="evidence" value="ECO:0007669"/>
    <property type="project" value="InterPro"/>
</dbReference>
<dbReference type="GO" id="GO:0019843">
    <property type="term" value="F:rRNA binding"/>
    <property type="evidence" value="ECO:0007669"/>
    <property type="project" value="UniProtKB-UniRule"/>
</dbReference>
<dbReference type="GO" id="GO:0003735">
    <property type="term" value="F:structural constituent of ribosome"/>
    <property type="evidence" value="ECO:0007669"/>
    <property type="project" value="InterPro"/>
</dbReference>
<dbReference type="GO" id="GO:0000049">
    <property type="term" value="F:tRNA binding"/>
    <property type="evidence" value="ECO:0007669"/>
    <property type="project" value="UniProtKB-UniRule"/>
</dbReference>
<dbReference type="GO" id="GO:0006412">
    <property type="term" value="P:translation"/>
    <property type="evidence" value="ECO:0007669"/>
    <property type="project" value="UniProtKB-UniRule"/>
</dbReference>
<dbReference type="CDD" id="cd14869">
    <property type="entry name" value="uS7_Bacteria"/>
    <property type="match status" value="1"/>
</dbReference>
<dbReference type="FunFam" id="1.10.455.10:FF:000001">
    <property type="entry name" value="30S ribosomal protein S7"/>
    <property type="match status" value="1"/>
</dbReference>
<dbReference type="Gene3D" id="1.10.455.10">
    <property type="entry name" value="Ribosomal protein S7 domain"/>
    <property type="match status" value="1"/>
</dbReference>
<dbReference type="HAMAP" id="MF_00480_B">
    <property type="entry name" value="Ribosomal_uS7_B"/>
    <property type="match status" value="1"/>
</dbReference>
<dbReference type="InterPro" id="IPR000235">
    <property type="entry name" value="Ribosomal_uS7"/>
</dbReference>
<dbReference type="InterPro" id="IPR005717">
    <property type="entry name" value="Ribosomal_uS7_bac/org-type"/>
</dbReference>
<dbReference type="InterPro" id="IPR020606">
    <property type="entry name" value="Ribosomal_uS7_CS"/>
</dbReference>
<dbReference type="InterPro" id="IPR023798">
    <property type="entry name" value="Ribosomal_uS7_dom"/>
</dbReference>
<dbReference type="InterPro" id="IPR036823">
    <property type="entry name" value="Ribosomal_uS7_dom_sf"/>
</dbReference>
<dbReference type="NCBIfam" id="TIGR01029">
    <property type="entry name" value="rpsG_bact"/>
    <property type="match status" value="1"/>
</dbReference>
<dbReference type="PANTHER" id="PTHR11205">
    <property type="entry name" value="RIBOSOMAL PROTEIN S7"/>
    <property type="match status" value="1"/>
</dbReference>
<dbReference type="Pfam" id="PF00177">
    <property type="entry name" value="Ribosomal_S7"/>
    <property type="match status" value="1"/>
</dbReference>
<dbReference type="PIRSF" id="PIRSF002122">
    <property type="entry name" value="RPS7p_RPS7a_RPS5e_RPS7o"/>
    <property type="match status" value="1"/>
</dbReference>
<dbReference type="SUPFAM" id="SSF47973">
    <property type="entry name" value="Ribosomal protein S7"/>
    <property type="match status" value="1"/>
</dbReference>
<dbReference type="PROSITE" id="PS00052">
    <property type="entry name" value="RIBOSOMAL_S7"/>
    <property type="match status" value="1"/>
</dbReference>
<gene>
    <name evidence="1" type="primary">rpsG</name>
    <name type="ordered locus">PD_1998</name>
</gene>
<name>RS7_XYLFT</name>
<organism>
    <name type="scientific">Xylella fastidiosa (strain Temecula1 / ATCC 700964)</name>
    <dbReference type="NCBI Taxonomy" id="183190"/>
    <lineage>
        <taxon>Bacteria</taxon>
        <taxon>Pseudomonadati</taxon>
        <taxon>Pseudomonadota</taxon>
        <taxon>Gammaproteobacteria</taxon>
        <taxon>Lysobacterales</taxon>
        <taxon>Lysobacteraceae</taxon>
        <taxon>Xylella</taxon>
    </lineage>
</organism>